<feature type="chain" id="PRO_0000306777" description="Dicer-like protein 1">
    <location>
        <begin position="1"/>
        <end position="1519"/>
    </location>
</feature>
<feature type="domain" description="Helicase ATP-binding" evidence="5">
    <location>
        <begin position="116"/>
        <end position="297"/>
    </location>
</feature>
<feature type="domain" description="Helicase C-terminal" evidence="6">
    <location>
        <begin position="431"/>
        <end position="601"/>
    </location>
</feature>
<feature type="domain" description="Dicer dsRNA-binding fold" evidence="7">
    <location>
        <begin position="634"/>
        <end position="724"/>
    </location>
</feature>
<feature type="domain" description="PAZ" evidence="3">
    <location>
        <begin position="882"/>
        <end position="1001"/>
    </location>
</feature>
<feature type="domain" description="RNase III 1" evidence="4">
    <location>
        <begin position="1026"/>
        <end position="1184"/>
    </location>
</feature>
<feature type="domain" description="RNase III 2" evidence="4">
    <location>
        <begin position="1235"/>
        <end position="1387"/>
    </location>
</feature>
<feature type="domain" description="DRBM">
    <location>
        <begin position="1421"/>
        <end position="1489"/>
    </location>
</feature>
<feature type="region of interest" description="Disordered" evidence="8">
    <location>
        <begin position="1"/>
        <end position="62"/>
    </location>
</feature>
<feature type="short sequence motif" description="DEAH box">
    <location>
        <begin position="242"/>
        <end position="245"/>
    </location>
</feature>
<feature type="compositionally biased region" description="Polar residues" evidence="8">
    <location>
        <begin position="1"/>
        <end position="13"/>
    </location>
</feature>
<feature type="compositionally biased region" description="Acidic residues" evidence="8">
    <location>
        <begin position="39"/>
        <end position="48"/>
    </location>
</feature>
<feature type="binding site" evidence="5">
    <location>
        <begin position="129"/>
        <end position="136"/>
    </location>
    <ligand>
        <name>ATP</name>
        <dbReference type="ChEBI" id="CHEBI:30616"/>
    </ligand>
</feature>
<feature type="binding site" evidence="1">
    <location>
        <position position="1275"/>
    </location>
    <ligand>
        <name>Mg(2+)</name>
        <dbReference type="ChEBI" id="CHEBI:18420"/>
    </ligand>
</feature>
<feature type="binding site" evidence="1">
    <location>
        <position position="1373"/>
    </location>
    <ligand>
        <name>Mg(2+)</name>
        <dbReference type="ChEBI" id="CHEBI:18420"/>
    </ligand>
</feature>
<feature type="binding site" evidence="1">
    <location>
        <position position="1376"/>
    </location>
    <ligand>
        <name>Mg(2+)</name>
        <dbReference type="ChEBI" id="CHEBI:18420"/>
    </ligand>
</feature>
<feature type="binding site" evidence="2">
    <location>
        <position position="1433"/>
    </location>
    <ligand>
        <name>Zn(2+)</name>
        <dbReference type="ChEBI" id="CHEBI:29105"/>
    </ligand>
</feature>
<feature type="binding site" evidence="2">
    <location>
        <position position="1460"/>
    </location>
    <ligand>
        <name>Zn(2+)</name>
        <dbReference type="ChEBI" id="CHEBI:29105"/>
    </ligand>
</feature>
<feature type="binding site" evidence="2">
    <location>
        <position position="1501"/>
    </location>
    <ligand>
        <name>Zn(2+)</name>
        <dbReference type="ChEBI" id="CHEBI:29105"/>
    </ligand>
</feature>
<feature type="binding site" evidence="2">
    <location>
        <position position="1503"/>
    </location>
    <ligand>
        <name>Zn(2+)</name>
        <dbReference type="ChEBI" id="CHEBI:29105"/>
    </ligand>
</feature>
<feature type="site" description="Important for activity" evidence="1">
    <location>
        <position position="1368"/>
    </location>
</feature>
<name>DCL1_ASPTN</name>
<gene>
    <name type="primary">dcl1</name>
    <name type="ORF">ATEG_02092</name>
</gene>
<organism>
    <name type="scientific">Aspergillus terreus (strain NIH 2624 / FGSC A1156)</name>
    <dbReference type="NCBI Taxonomy" id="341663"/>
    <lineage>
        <taxon>Eukaryota</taxon>
        <taxon>Fungi</taxon>
        <taxon>Dikarya</taxon>
        <taxon>Ascomycota</taxon>
        <taxon>Pezizomycotina</taxon>
        <taxon>Eurotiomycetes</taxon>
        <taxon>Eurotiomycetidae</taxon>
        <taxon>Eurotiales</taxon>
        <taxon>Aspergillaceae</taxon>
        <taxon>Aspergillus</taxon>
        <taxon>Aspergillus subgen. Circumdati</taxon>
    </lineage>
</organism>
<comment type="function">
    <text evidence="1">Dicer-like endonuclease involved in cleaving double-stranded RNA in the RNA interference (RNAi) pathway. Produces 21 to 25 bp dsRNAs (siRNAs) which target the selective destruction of homologous RNAs leading to sequence-specific suppression of gene expression, called post-transcriptional gene silencing (PTGS). Part of a broad host defense response against viral infection and transposons (By similarity).</text>
</comment>
<comment type="cofactor">
    <cofactor evidence="1">
        <name>Mg(2+)</name>
        <dbReference type="ChEBI" id="CHEBI:18420"/>
    </cofactor>
    <cofactor evidence="1">
        <name>Mn(2+)</name>
        <dbReference type="ChEBI" id="CHEBI:29035"/>
    </cofactor>
</comment>
<comment type="similarity">
    <text evidence="7">Belongs to the helicase family. Dicer subfamily.</text>
</comment>
<comment type="sequence caution" evidence="9">
    <conflict type="erroneous gene model prediction">
        <sequence resource="EMBL-CDS" id="EAU37054"/>
    </conflict>
</comment>
<sequence>MTHQNTETASLATTKGALEPLPPDKTAGLSTGAGHEISSDESEGSEEETGLHKDPSQRQRQQNATFQAFLSHHAETIVNSPVKPNQAQSELSISSLIGRNASGTGILNPREYQIELFERAKVQNTIAVLDTGSGKTLIAVLLLKHVIQTELIDRANGNPPRISFFLVDSVTLVYQQASVLRNNLDQNVAHFFGAMGVDLWNKQTWAEHFEKNMVIVCTAEILNQCLLNAYITMQQINLLVFDEAHHTKKDHPYARIIRDSYLRVPPSSRPRIFGMTASPVDTKGDVLEAARNLEALLDSKIATTSKLTILRQVVNRPNEEVWIYDKLQPTFTSDLYKLMESRFGDISHLEPMFRFARHATSELGTWCADRVWVSALADDVLPKVEGSIGGKRQSTGLGQLPKDVHRDITRIKEASELVESHPPNDPGAPEALSSKVRVLWKEISQCFGQETNTKCIVFTEKRYTAKVLFDLFTVLNVPGLRPGVLIGVRSSDRIGMNVTFRQQILTMVRFRTGEINCLFATAVAEEGLDIPDCNLVVRFDLYKTLIQYVQSRGRARHADSTYASMIEKDNADHESILVQVNDAEKIMQSFCQLLPEDRILHGNDDDTDAVLDREEWEEPYTLPSTAARLTHHSAITVLARYASSLQYENDTSAQVTYVVLPVNDAYVCEVILPEKSPIRGATGMPAMKKSTAKRYAAFEACRLLRKHRLLDEYLNSVYHRRLPAMRNARLAITSHRTNEYKILPKSSLWNKQIGVIPGKLYGTVISLKPLTPLAREHGSMILFTRDRLPQFPTFPIFLGEDVETIVLTVPVNMELQPSADELDYMTTFTLRIFRDVFRKTYDKEPEKLPYWLLPAISFPCNQEADPRDVVNWEILSSVHERDDIEYQADMPPEMLVDRFVYDHWDGRYRYFTLAVDENLQPSSPPPSHVARRRHMDTIMNYSISLSKNSRAKFLSRCNWNQPVLHAELVRLRRNLLDRMTDKERKLETRSVICIEPLKISAIPAAIAATCLAFPAIISRLDAYLIGLEACKKLGLEISLEYALEALTKDSDNTHEHRSQQVHMQRGMGKNYERLEFLGDCFLKMATSISLFNQHPDDNEFDYHVNRMCLICNRNLFNSAVKKELYQFIRSRGFSRDTWYPEGLTLLQGRDHSKKIGSESKHALAEKTIADVCEALIGAALLTPGPQHRFDMGVRAVSAVVDSNEHNAASWRDYISLYSIPKYQEQAPDGSEIDLCRRVEEKLGYHFRYPRLLHSAFTHPSYPSAWARVPCYQSLEFLGDALLDMVCVEDLFRRFPDRDPQWLTEHKMAMVSNKFLGALAVKLGLHTHLSYFSSALQSQITHYAEEAQAAASQSDVAVDYWTLTQDPPKVCLPDMVEAYLGAVFVDSNFRFEEVEVFFQQHIKPYFHDMAIYDTFANRHPTTFLHNKLTNEYGCLNYCLKAGEIPGADGDASTVLAAVIVHDTILTTGVASSGRYAKVKASENALTELLHIDRNEFRKRYQCDCVQENGEHGERDVGTPI</sequence>
<evidence type="ECO:0000250" key="1"/>
<evidence type="ECO:0000250" key="2">
    <source>
        <dbReference type="UniProtKB" id="Q09884"/>
    </source>
</evidence>
<evidence type="ECO:0000255" key="3">
    <source>
        <dbReference type="PROSITE-ProRule" id="PRU00142"/>
    </source>
</evidence>
<evidence type="ECO:0000255" key="4">
    <source>
        <dbReference type="PROSITE-ProRule" id="PRU00177"/>
    </source>
</evidence>
<evidence type="ECO:0000255" key="5">
    <source>
        <dbReference type="PROSITE-ProRule" id="PRU00541"/>
    </source>
</evidence>
<evidence type="ECO:0000255" key="6">
    <source>
        <dbReference type="PROSITE-ProRule" id="PRU00542"/>
    </source>
</evidence>
<evidence type="ECO:0000255" key="7">
    <source>
        <dbReference type="PROSITE-ProRule" id="PRU00657"/>
    </source>
</evidence>
<evidence type="ECO:0000256" key="8">
    <source>
        <dbReference type="SAM" id="MobiDB-lite"/>
    </source>
</evidence>
<evidence type="ECO:0000305" key="9"/>
<reference key="1">
    <citation type="submission" date="2005-09" db="EMBL/GenBank/DDBJ databases">
        <title>Annotation of the Aspergillus terreus NIH2624 genome.</title>
        <authorList>
            <person name="Birren B.W."/>
            <person name="Lander E.S."/>
            <person name="Galagan J.E."/>
            <person name="Nusbaum C."/>
            <person name="Devon K."/>
            <person name="Henn M."/>
            <person name="Ma L.-J."/>
            <person name="Jaffe D.B."/>
            <person name="Butler J."/>
            <person name="Alvarez P."/>
            <person name="Gnerre S."/>
            <person name="Grabherr M."/>
            <person name="Kleber M."/>
            <person name="Mauceli E.W."/>
            <person name="Brockman W."/>
            <person name="Rounsley S."/>
            <person name="Young S.K."/>
            <person name="LaButti K."/>
            <person name="Pushparaj V."/>
            <person name="DeCaprio D."/>
            <person name="Crawford M."/>
            <person name="Koehrsen M."/>
            <person name="Engels R."/>
            <person name="Montgomery P."/>
            <person name="Pearson M."/>
            <person name="Howarth C."/>
            <person name="Larson L."/>
            <person name="Luoma S."/>
            <person name="White J."/>
            <person name="Alvarado L."/>
            <person name="Kodira C.D."/>
            <person name="Zeng Q."/>
            <person name="Oleary S."/>
            <person name="Yandava C."/>
            <person name="Denning D.W."/>
            <person name="Nierman W.C."/>
            <person name="Milne T."/>
            <person name="Madden K."/>
        </authorList>
    </citation>
    <scope>NUCLEOTIDE SEQUENCE [LARGE SCALE GENOMIC DNA]</scope>
    <source>
        <strain>NIH 2624 / FGSC A1156</strain>
    </source>
</reference>
<dbReference type="EC" id="3.1.26.-"/>
<dbReference type="EC" id="3.6.4.-"/>
<dbReference type="EMBL" id="CH476596">
    <property type="protein sequence ID" value="EAU37054.1"/>
    <property type="status" value="ALT_SEQ"/>
    <property type="molecule type" value="Genomic_DNA"/>
</dbReference>
<dbReference type="RefSeq" id="XP_001211270.1">
    <property type="nucleotide sequence ID" value="XM_001211270.1"/>
</dbReference>
<dbReference type="SMR" id="Q0CW42"/>
<dbReference type="STRING" id="341663.Q0CW42"/>
<dbReference type="GeneID" id="4316974"/>
<dbReference type="eggNOG" id="KOG0701">
    <property type="taxonomic scope" value="Eukaryota"/>
</dbReference>
<dbReference type="OrthoDB" id="416741at2759"/>
<dbReference type="Proteomes" id="UP000007963">
    <property type="component" value="Unassembled WGS sequence"/>
</dbReference>
<dbReference type="GO" id="GO:0005737">
    <property type="term" value="C:cytoplasm"/>
    <property type="evidence" value="ECO:0007669"/>
    <property type="project" value="TreeGrafter"/>
</dbReference>
<dbReference type="GO" id="GO:0005634">
    <property type="term" value="C:nucleus"/>
    <property type="evidence" value="ECO:0007669"/>
    <property type="project" value="TreeGrafter"/>
</dbReference>
<dbReference type="GO" id="GO:0005524">
    <property type="term" value="F:ATP binding"/>
    <property type="evidence" value="ECO:0007669"/>
    <property type="project" value="UniProtKB-KW"/>
</dbReference>
<dbReference type="GO" id="GO:0003677">
    <property type="term" value="F:DNA binding"/>
    <property type="evidence" value="ECO:0007669"/>
    <property type="project" value="InterPro"/>
</dbReference>
<dbReference type="GO" id="GO:0004386">
    <property type="term" value="F:helicase activity"/>
    <property type="evidence" value="ECO:0007669"/>
    <property type="project" value="UniProtKB-KW"/>
</dbReference>
<dbReference type="GO" id="GO:0046872">
    <property type="term" value="F:metal ion binding"/>
    <property type="evidence" value="ECO:0007669"/>
    <property type="project" value="UniProtKB-KW"/>
</dbReference>
<dbReference type="GO" id="GO:0004525">
    <property type="term" value="F:ribonuclease III activity"/>
    <property type="evidence" value="ECO:0007669"/>
    <property type="project" value="InterPro"/>
</dbReference>
<dbReference type="GO" id="GO:0003723">
    <property type="term" value="F:RNA binding"/>
    <property type="evidence" value="ECO:0007669"/>
    <property type="project" value="UniProtKB-KW"/>
</dbReference>
<dbReference type="GO" id="GO:0051607">
    <property type="term" value="P:defense response to virus"/>
    <property type="evidence" value="ECO:0007669"/>
    <property type="project" value="UniProtKB-KW"/>
</dbReference>
<dbReference type="GO" id="GO:0050688">
    <property type="term" value="P:regulation of defense response to virus"/>
    <property type="evidence" value="ECO:0007669"/>
    <property type="project" value="UniProtKB-KW"/>
</dbReference>
<dbReference type="GO" id="GO:0030422">
    <property type="term" value="P:siRNA processing"/>
    <property type="evidence" value="ECO:0007669"/>
    <property type="project" value="TreeGrafter"/>
</dbReference>
<dbReference type="CDD" id="cd18034">
    <property type="entry name" value="DEXHc_dicer"/>
    <property type="match status" value="1"/>
</dbReference>
<dbReference type="CDD" id="cd00593">
    <property type="entry name" value="RIBOc"/>
    <property type="match status" value="2"/>
</dbReference>
<dbReference type="FunFam" id="1.10.1520.10:FF:000015">
    <property type="entry name" value="Dicer-like protein 1"/>
    <property type="match status" value="1"/>
</dbReference>
<dbReference type="FunFam" id="1.10.1520.10:FF:000026">
    <property type="entry name" value="Dicer-like protein 1"/>
    <property type="match status" value="1"/>
</dbReference>
<dbReference type="FunFam" id="3.30.160.380:FF:000004">
    <property type="entry name" value="Dicer-like protein 1"/>
    <property type="match status" value="1"/>
</dbReference>
<dbReference type="FunFam" id="3.40.50.300:FF:001669">
    <property type="entry name" value="Dicer-like protein 1"/>
    <property type="match status" value="1"/>
</dbReference>
<dbReference type="FunFam" id="3.40.50.300:FF:001988">
    <property type="entry name" value="Dicer-like protein 1"/>
    <property type="match status" value="1"/>
</dbReference>
<dbReference type="Gene3D" id="3.30.160.380">
    <property type="entry name" value="Dicer dimerisation domain"/>
    <property type="match status" value="1"/>
</dbReference>
<dbReference type="Gene3D" id="3.40.50.300">
    <property type="entry name" value="P-loop containing nucleotide triphosphate hydrolases"/>
    <property type="match status" value="2"/>
</dbReference>
<dbReference type="Gene3D" id="1.10.1520.10">
    <property type="entry name" value="Ribonuclease III domain"/>
    <property type="match status" value="2"/>
</dbReference>
<dbReference type="InterPro" id="IPR038248">
    <property type="entry name" value="Dicer_dimer_sf"/>
</dbReference>
<dbReference type="InterPro" id="IPR005034">
    <property type="entry name" value="Dicer_dimerisation_dom"/>
</dbReference>
<dbReference type="InterPro" id="IPR056755">
    <property type="entry name" value="DSRM_2"/>
</dbReference>
<dbReference type="InterPro" id="IPR006935">
    <property type="entry name" value="Helicase/UvrB_N"/>
</dbReference>
<dbReference type="InterPro" id="IPR014001">
    <property type="entry name" value="Helicase_ATP-bd"/>
</dbReference>
<dbReference type="InterPro" id="IPR001650">
    <property type="entry name" value="Helicase_C-like"/>
</dbReference>
<dbReference type="InterPro" id="IPR027417">
    <property type="entry name" value="P-loop_NTPase"/>
</dbReference>
<dbReference type="InterPro" id="IPR003100">
    <property type="entry name" value="PAZ_dom"/>
</dbReference>
<dbReference type="InterPro" id="IPR000999">
    <property type="entry name" value="RNase_III_dom"/>
</dbReference>
<dbReference type="InterPro" id="IPR036389">
    <property type="entry name" value="RNase_III_sf"/>
</dbReference>
<dbReference type="PANTHER" id="PTHR14950:SF62">
    <property type="entry name" value="DICER-LIKE PROTEIN 1"/>
    <property type="match status" value="1"/>
</dbReference>
<dbReference type="PANTHER" id="PTHR14950">
    <property type="entry name" value="DICER-RELATED"/>
    <property type="match status" value="1"/>
</dbReference>
<dbReference type="Pfam" id="PF03368">
    <property type="entry name" value="Dicer_dimer"/>
    <property type="match status" value="1"/>
</dbReference>
<dbReference type="Pfam" id="PF24995">
    <property type="entry name" value="DSRM_2"/>
    <property type="match status" value="1"/>
</dbReference>
<dbReference type="Pfam" id="PF00271">
    <property type="entry name" value="Helicase_C"/>
    <property type="match status" value="1"/>
</dbReference>
<dbReference type="Pfam" id="PF04851">
    <property type="entry name" value="ResIII"/>
    <property type="match status" value="1"/>
</dbReference>
<dbReference type="Pfam" id="PF00636">
    <property type="entry name" value="Ribonuclease_3"/>
    <property type="match status" value="2"/>
</dbReference>
<dbReference type="SMART" id="SM00487">
    <property type="entry name" value="DEXDc"/>
    <property type="match status" value="1"/>
</dbReference>
<dbReference type="SMART" id="SM00490">
    <property type="entry name" value="HELICc"/>
    <property type="match status" value="1"/>
</dbReference>
<dbReference type="SMART" id="SM00535">
    <property type="entry name" value="RIBOc"/>
    <property type="match status" value="2"/>
</dbReference>
<dbReference type="SUPFAM" id="SSF52540">
    <property type="entry name" value="P-loop containing nucleoside triphosphate hydrolases"/>
    <property type="match status" value="1"/>
</dbReference>
<dbReference type="SUPFAM" id="SSF69065">
    <property type="entry name" value="RNase III domain-like"/>
    <property type="match status" value="2"/>
</dbReference>
<dbReference type="PROSITE" id="PS51327">
    <property type="entry name" value="DICER_DSRBF"/>
    <property type="match status" value="1"/>
</dbReference>
<dbReference type="PROSITE" id="PS51192">
    <property type="entry name" value="HELICASE_ATP_BIND_1"/>
    <property type="match status" value="1"/>
</dbReference>
<dbReference type="PROSITE" id="PS51194">
    <property type="entry name" value="HELICASE_CTER"/>
    <property type="match status" value="1"/>
</dbReference>
<dbReference type="PROSITE" id="PS50821">
    <property type="entry name" value="PAZ"/>
    <property type="match status" value="1"/>
</dbReference>
<dbReference type="PROSITE" id="PS50142">
    <property type="entry name" value="RNASE_3_2"/>
    <property type="match status" value="2"/>
</dbReference>
<accession>Q0CW42</accession>
<proteinExistence type="inferred from homology"/>
<keyword id="KW-0051">Antiviral defense</keyword>
<keyword id="KW-0930">Antiviral protein</keyword>
<keyword id="KW-0067">ATP-binding</keyword>
<keyword id="KW-0347">Helicase</keyword>
<keyword id="KW-0378">Hydrolase</keyword>
<keyword id="KW-0460">Magnesium</keyword>
<keyword id="KW-0464">Manganese</keyword>
<keyword id="KW-0479">Metal-binding</keyword>
<keyword id="KW-0547">Nucleotide-binding</keyword>
<keyword id="KW-1185">Reference proteome</keyword>
<keyword id="KW-0677">Repeat</keyword>
<keyword id="KW-0694">RNA-binding</keyword>
<keyword id="KW-0862">Zinc</keyword>
<protein>
    <recommendedName>
        <fullName>Dicer-like protein 1</fullName>
    </recommendedName>
    <domain>
        <recommendedName>
            <fullName>Endoribonuclease dcl1</fullName>
            <ecNumber>3.1.26.-</ecNumber>
        </recommendedName>
    </domain>
    <domain>
        <recommendedName>
            <fullName>ATP-dependent helicase dcl1</fullName>
            <ecNumber>3.6.4.-</ecNumber>
        </recommendedName>
    </domain>
</protein>